<organism>
    <name type="scientific">Ascaphus truei</name>
    <name type="common">Coastal tailed frog</name>
    <dbReference type="NCBI Taxonomy" id="8439"/>
    <lineage>
        <taxon>Eukaryota</taxon>
        <taxon>Metazoa</taxon>
        <taxon>Chordata</taxon>
        <taxon>Craniata</taxon>
        <taxon>Vertebrata</taxon>
        <taxon>Euteleostomi</taxon>
        <taxon>Amphibia</taxon>
        <taxon>Batrachia</taxon>
        <taxon>Anura</taxon>
        <taxon>Ascaphidae</taxon>
        <taxon>Ascaphus</taxon>
    </lineage>
</organism>
<name>SKSP5_ASCTR</name>
<sequence>ITKDFDALMKYIKRI</sequence>
<comment type="subcellular location">
    <subcellularLocation>
        <location evidence="1">Secreted</location>
    </subcellularLocation>
</comment>
<comment type="tissue specificity">
    <text evidence="1">Expressed by the skin glands.</text>
</comment>
<comment type="mass spectrometry"/>
<dbReference type="GO" id="GO:0005576">
    <property type="term" value="C:extracellular region"/>
    <property type="evidence" value="ECO:0000314"/>
    <property type="project" value="UniProtKB"/>
</dbReference>
<proteinExistence type="evidence at protein level"/>
<accession>P84830</accession>
<reference evidence="2" key="1">
    <citation type="journal article" date="2005" name="Gen. Comp. Endocrinol.">
        <title>Bradykinin-related peptides and tryptophyllins in the skin secretions of the most primitive extant frog, Ascaphus truei.</title>
        <authorList>
            <person name="Conlon J.M."/>
            <person name="Jouenne T."/>
            <person name="Cosette P."/>
            <person name="Cosquer D."/>
            <person name="Vaudry H."/>
            <person name="Taylor C.K."/>
            <person name="Abel P.W."/>
        </authorList>
    </citation>
    <scope>PROTEIN SEQUENCE</scope>
    <scope>SUBCELLULAR LOCATION</scope>
    <scope>TISSUE SPECIFICITY</scope>
    <scope>MASS SPECTROMETRY</scope>
    <source>
        <tissue evidence="1">Skin secretion</tissue>
    </source>
</reference>
<feature type="peptide" id="PRO_0000233932" description="Skin secreted peptide 5" evidence="1">
    <location>
        <begin position="1"/>
        <end position="15"/>
    </location>
</feature>
<evidence type="ECO:0000269" key="1">
    <source>
    </source>
</evidence>
<evidence type="ECO:0000305" key="2"/>
<protein>
    <recommendedName>
        <fullName>Skin secreted peptide 5</fullName>
    </recommendedName>
</protein>
<keyword id="KW-0903">Direct protein sequencing</keyword>
<keyword id="KW-0964">Secreted</keyword>